<gene>
    <name type="ordered locus">ABC2430</name>
</gene>
<reference key="1">
    <citation type="submission" date="2003-10" db="EMBL/GenBank/DDBJ databases">
        <title>The complete genome sequence of the alkaliphilic Bacillus clausii KSM-K16.</title>
        <authorList>
            <person name="Takaki Y."/>
            <person name="Kageyama Y."/>
            <person name="Shimamura S."/>
            <person name="Suzuki H."/>
            <person name="Nishi S."/>
            <person name="Hatada Y."/>
            <person name="Kawai S."/>
            <person name="Ito S."/>
            <person name="Horikoshi K."/>
        </authorList>
    </citation>
    <scope>NUCLEOTIDE SEQUENCE [LARGE SCALE GENOMIC DNA]</scope>
    <source>
        <strain>KSM-K16</strain>
    </source>
</reference>
<keyword id="KW-1185">Reference proteome</keyword>
<protein>
    <recommendedName>
        <fullName evidence="1">UPF0180 protein ABC2430</fullName>
    </recommendedName>
</protein>
<organism>
    <name type="scientific">Shouchella clausii (strain KSM-K16)</name>
    <name type="common">Alkalihalobacillus clausii</name>
    <dbReference type="NCBI Taxonomy" id="66692"/>
    <lineage>
        <taxon>Bacteria</taxon>
        <taxon>Bacillati</taxon>
        <taxon>Bacillota</taxon>
        <taxon>Bacilli</taxon>
        <taxon>Bacillales</taxon>
        <taxon>Bacillaceae</taxon>
        <taxon>Shouchella</taxon>
    </lineage>
</organism>
<sequence length="81" mass="8714">MAKIGVQSNLSDVQQELQSKGYEVVQIENEQDGQDCECCIVSGRNADVAGISVPGQMSIIHAEGLSAEEIGQRVDEIVTQH</sequence>
<accession>Q5WF95</accession>
<comment type="similarity">
    <text evidence="1">Belongs to the UPF0180 family.</text>
</comment>
<evidence type="ECO:0000255" key="1">
    <source>
        <dbReference type="HAMAP-Rule" id="MF_00506"/>
    </source>
</evidence>
<name>Y2430_SHOC1</name>
<dbReference type="EMBL" id="AP006627">
    <property type="protein sequence ID" value="BAD64965.1"/>
    <property type="molecule type" value="Genomic_DNA"/>
</dbReference>
<dbReference type="RefSeq" id="WP_011247273.1">
    <property type="nucleotide sequence ID" value="NC_006582.1"/>
</dbReference>
<dbReference type="STRING" id="66692.ABC2430"/>
<dbReference type="KEGG" id="bcl:ABC2430"/>
<dbReference type="eggNOG" id="ENOG503307C">
    <property type="taxonomic scope" value="Bacteria"/>
</dbReference>
<dbReference type="HOGENOM" id="CLU_187365_0_0_9"/>
<dbReference type="OrthoDB" id="1708042at2"/>
<dbReference type="Proteomes" id="UP000001168">
    <property type="component" value="Chromosome"/>
</dbReference>
<dbReference type="HAMAP" id="MF_00506">
    <property type="entry name" value="UPF0180"/>
    <property type="match status" value="1"/>
</dbReference>
<dbReference type="InterPro" id="IPR005370">
    <property type="entry name" value="UPF0180"/>
</dbReference>
<dbReference type="NCBIfam" id="NF002845">
    <property type="entry name" value="PRK03094.1"/>
    <property type="match status" value="1"/>
</dbReference>
<dbReference type="Pfam" id="PF03698">
    <property type="entry name" value="UPF0180"/>
    <property type="match status" value="1"/>
</dbReference>
<proteinExistence type="inferred from homology"/>
<feature type="chain" id="PRO_0000172741" description="UPF0180 protein ABC2430">
    <location>
        <begin position="1"/>
        <end position="81"/>
    </location>
</feature>